<protein>
    <recommendedName>
        <fullName evidence="1">Flagellar L-ring protein</fullName>
    </recommendedName>
    <alternativeName>
        <fullName evidence="1">Basal body L-ring protein</fullName>
    </alternativeName>
</protein>
<accession>B7MTL0</accession>
<gene>
    <name evidence="1" type="primary">flgH</name>
    <name type="ordered locus">ECED1_1223</name>
</gene>
<proteinExistence type="inferred from homology"/>
<comment type="function">
    <text evidence="1">Assembles around the rod to form the L-ring and probably protects the motor/basal body from shearing forces during rotation.</text>
</comment>
<comment type="subunit">
    <text evidence="1">The basal body constitutes a major portion of the flagellar organelle and consists of four rings (L,P,S, and M) mounted on a central rod.</text>
</comment>
<comment type="subcellular location">
    <subcellularLocation>
        <location evidence="1">Cell outer membrane</location>
        <topology evidence="1">Lipid-anchor</topology>
    </subcellularLocation>
    <subcellularLocation>
        <location evidence="1">Bacterial flagellum basal body</location>
    </subcellularLocation>
</comment>
<comment type="similarity">
    <text evidence="1">Belongs to the FlgH family.</text>
</comment>
<sequence>MQKNAAHTYAISSLLVLSLTGCAWIPSTPLVQGATSAQPVPGPTPVANGSIFQSAQPINYGYQPLFEDRRPRNIGDTLTIVLQENVSASKSSSANASRDGKTNFGFDTVPRYLQGLFGNARADVEASGGNTFNGKGGANASNTFSGTLTVTVDQVLVNGNLHVVGEKQIAINQGTEFIRFSGVVNPRTISGSNTVPSTQVADARIEYVGNGYINEAQNMGWLQRFFLNLSPM</sequence>
<dbReference type="EMBL" id="CU928162">
    <property type="protein sequence ID" value="CAR07424.1"/>
    <property type="molecule type" value="Genomic_DNA"/>
</dbReference>
<dbReference type="RefSeq" id="WP_001295442.1">
    <property type="nucleotide sequence ID" value="NC_011745.1"/>
</dbReference>
<dbReference type="SMR" id="B7MTL0"/>
<dbReference type="GeneID" id="93776328"/>
<dbReference type="KEGG" id="ecq:ECED1_1223"/>
<dbReference type="HOGENOM" id="CLU_069313_0_0_6"/>
<dbReference type="Proteomes" id="UP000000748">
    <property type="component" value="Chromosome"/>
</dbReference>
<dbReference type="GO" id="GO:0009427">
    <property type="term" value="C:bacterial-type flagellum basal body, distal rod, L ring"/>
    <property type="evidence" value="ECO:0007669"/>
    <property type="project" value="InterPro"/>
</dbReference>
<dbReference type="GO" id="GO:0009279">
    <property type="term" value="C:cell outer membrane"/>
    <property type="evidence" value="ECO:0007669"/>
    <property type="project" value="UniProtKB-SubCell"/>
</dbReference>
<dbReference type="GO" id="GO:0003774">
    <property type="term" value="F:cytoskeletal motor activity"/>
    <property type="evidence" value="ECO:0007669"/>
    <property type="project" value="InterPro"/>
</dbReference>
<dbReference type="GO" id="GO:0071973">
    <property type="term" value="P:bacterial-type flagellum-dependent cell motility"/>
    <property type="evidence" value="ECO:0007669"/>
    <property type="project" value="InterPro"/>
</dbReference>
<dbReference type="HAMAP" id="MF_00415">
    <property type="entry name" value="FlgH"/>
    <property type="match status" value="1"/>
</dbReference>
<dbReference type="InterPro" id="IPR000527">
    <property type="entry name" value="Flag_Lring"/>
</dbReference>
<dbReference type="NCBIfam" id="NF001301">
    <property type="entry name" value="PRK00249.1-1"/>
    <property type="match status" value="1"/>
</dbReference>
<dbReference type="PANTHER" id="PTHR34933">
    <property type="entry name" value="FLAGELLAR L-RING PROTEIN"/>
    <property type="match status" value="1"/>
</dbReference>
<dbReference type="PANTHER" id="PTHR34933:SF3">
    <property type="entry name" value="FLAGELLAR L-RING PROTEIN"/>
    <property type="match status" value="1"/>
</dbReference>
<dbReference type="Pfam" id="PF02107">
    <property type="entry name" value="FlgH"/>
    <property type="match status" value="1"/>
</dbReference>
<dbReference type="PRINTS" id="PR01008">
    <property type="entry name" value="FLGLRINGFLGH"/>
</dbReference>
<dbReference type="PROSITE" id="PS51257">
    <property type="entry name" value="PROKAR_LIPOPROTEIN"/>
    <property type="match status" value="1"/>
</dbReference>
<reference key="1">
    <citation type="journal article" date="2009" name="PLoS Genet.">
        <title>Organised genome dynamics in the Escherichia coli species results in highly diverse adaptive paths.</title>
        <authorList>
            <person name="Touchon M."/>
            <person name="Hoede C."/>
            <person name="Tenaillon O."/>
            <person name="Barbe V."/>
            <person name="Baeriswyl S."/>
            <person name="Bidet P."/>
            <person name="Bingen E."/>
            <person name="Bonacorsi S."/>
            <person name="Bouchier C."/>
            <person name="Bouvet O."/>
            <person name="Calteau A."/>
            <person name="Chiapello H."/>
            <person name="Clermont O."/>
            <person name="Cruveiller S."/>
            <person name="Danchin A."/>
            <person name="Diard M."/>
            <person name="Dossat C."/>
            <person name="Karoui M.E."/>
            <person name="Frapy E."/>
            <person name="Garry L."/>
            <person name="Ghigo J.M."/>
            <person name="Gilles A.M."/>
            <person name="Johnson J."/>
            <person name="Le Bouguenec C."/>
            <person name="Lescat M."/>
            <person name="Mangenot S."/>
            <person name="Martinez-Jehanne V."/>
            <person name="Matic I."/>
            <person name="Nassif X."/>
            <person name="Oztas S."/>
            <person name="Petit M.A."/>
            <person name="Pichon C."/>
            <person name="Rouy Z."/>
            <person name="Ruf C.S."/>
            <person name="Schneider D."/>
            <person name="Tourret J."/>
            <person name="Vacherie B."/>
            <person name="Vallenet D."/>
            <person name="Medigue C."/>
            <person name="Rocha E.P.C."/>
            <person name="Denamur E."/>
        </authorList>
    </citation>
    <scope>NUCLEOTIDE SEQUENCE [LARGE SCALE GENOMIC DNA]</scope>
    <source>
        <strain>ED1a</strain>
    </source>
</reference>
<name>FLGH_ECO81</name>
<evidence type="ECO:0000255" key="1">
    <source>
        <dbReference type="HAMAP-Rule" id="MF_00415"/>
    </source>
</evidence>
<keyword id="KW-0975">Bacterial flagellum</keyword>
<keyword id="KW-0998">Cell outer membrane</keyword>
<keyword id="KW-0449">Lipoprotein</keyword>
<keyword id="KW-0472">Membrane</keyword>
<keyword id="KW-0564">Palmitate</keyword>
<keyword id="KW-0732">Signal</keyword>
<organism>
    <name type="scientific">Escherichia coli O81 (strain ED1a)</name>
    <dbReference type="NCBI Taxonomy" id="585397"/>
    <lineage>
        <taxon>Bacteria</taxon>
        <taxon>Pseudomonadati</taxon>
        <taxon>Pseudomonadota</taxon>
        <taxon>Gammaproteobacteria</taxon>
        <taxon>Enterobacterales</taxon>
        <taxon>Enterobacteriaceae</taxon>
        <taxon>Escherichia</taxon>
    </lineage>
</organism>
<feature type="signal peptide" evidence="1">
    <location>
        <begin position="1"/>
        <end position="21"/>
    </location>
</feature>
<feature type="chain" id="PRO_1000134830" description="Flagellar L-ring protein">
    <location>
        <begin position="22"/>
        <end position="232"/>
    </location>
</feature>
<feature type="lipid moiety-binding region" description="N-palmitoyl cysteine" evidence="1">
    <location>
        <position position="22"/>
    </location>
</feature>
<feature type="lipid moiety-binding region" description="S-diacylglycerol cysteine" evidence="1">
    <location>
        <position position="22"/>
    </location>
</feature>